<protein>
    <recommendedName>
        <fullName evidence="1">Bifunctional protein FolD</fullName>
    </recommendedName>
    <domain>
        <recommendedName>
            <fullName evidence="1">Methylenetetrahydrofolate dehydrogenase</fullName>
            <ecNumber evidence="1">1.5.1.5</ecNumber>
        </recommendedName>
    </domain>
    <domain>
        <recommendedName>
            <fullName evidence="1">Methenyltetrahydrofolate cyclohydrolase</fullName>
            <ecNumber evidence="1">3.5.4.9</ecNumber>
        </recommendedName>
    </domain>
</protein>
<keyword id="KW-0028">Amino-acid biosynthesis</keyword>
<keyword id="KW-0368">Histidine biosynthesis</keyword>
<keyword id="KW-0378">Hydrolase</keyword>
<keyword id="KW-0486">Methionine biosynthesis</keyword>
<keyword id="KW-0511">Multifunctional enzyme</keyword>
<keyword id="KW-0521">NADP</keyword>
<keyword id="KW-0554">One-carbon metabolism</keyword>
<keyword id="KW-0560">Oxidoreductase</keyword>
<keyword id="KW-0658">Purine biosynthesis</keyword>
<organism>
    <name type="scientific">Bacillus cereus (strain 03BB102)</name>
    <dbReference type="NCBI Taxonomy" id="572264"/>
    <lineage>
        <taxon>Bacteria</taxon>
        <taxon>Bacillati</taxon>
        <taxon>Bacillota</taxon>
        <taxon>Bacilli</taxon>
        <taxon>Bacillales</taxon>
        <taxon>Bacillaceae</taxon>
        <taxon>Bacillus</taxon>
        <taxon>Bacillus cereus group</taxon>
    </lineage>
</organism>
<comment type="function">
    <text evidence="1">Catalyzes the oxidation of 5,10-methylenetetrahydrofolate to 5,10-methenyltetrahydrofolate and then the hydrolysis of 5,10-methenyltetrahydrofolate to 10-formyltetrahydrofolate.</text>
</comment>
<comment type="catalytic activity">
    <reaction evidence="1">
        <text>(6R)-5,10-methylene-5,6,7,8-tetrahydrofolate + NADP(+) = (6R)-5,10-methenyltetrahydrofolate + NADPH</text>
        <dbReference type="Rhea" id="RHEA:22812"/>
        <dbReference type="ChEBI" id="CHEBI:15636"/>
        <dbReference type="ChEBI" id="CHEBI:57455"/>
        <dbReference type="ChEBI" id="CHEBI:57783"/>
        <dbReference type="ChEBI" id="CHEBI:58349"/>
        <dbReference type="EC" id="1.5.1.5"/>
    </reaction>
</comment>
<comment type="catalytic activity">
    <reaction evidence="1">
        <text>(6R)-5,10-methenyltetrahydrofolate + H2O = (6R)-10-formyltetrahydrofolate + H(+)</text>
        <dbReference type="Rhea" id="RHEA:23700"/>
        <dbReference type="ChEBI" id="CHEBI:15377"/>
        <dbReference type="ChEBI" id="CHEBI:15378"/>
        <dbReference type="ChEBI" id="CHEBI:57455"/>
        <dbReference type="ChEBI" id="CHEBI:195366"/>
        <dbReference type="EC" id="3.5.4.9"/>
    </reaction>
</comment>
<comment type="pathway">
    <text evidence="1">One-carbon metabolism; tetrahydrofolate interconversion.</text>
</comment>
<comment type="subunit">
    <text evidence="1">Homodimer.</text>
</comment>
<comment type="similarity">
    <text evidence="1">Belongs to the tetrahydrofolate dehydrogenase/cyclohydrolase family.</text>
</comment>
<reference key="1">
    <citation type="submission" date="2009-02" db="EMBL/GenBank/DDBJ databases">
        <title>Genome sequence of Bacillus cereus 03BB102.</title>
        <authorList>
            <person name="Dodson R.J."/>
            <person name="Jackson P."/>
            <person name="Munk A.C."/>
            <person name="Brettin T."/>
            <person name="Bruce D."/>
            <person name="Detter C."/>
            <person name="Tapia R."/>
            <person name="Han C."/>
            <person name="Sutton G."/>
            <person name="Sims D."/>
        </authorList>
    </citation>
    <scope>NUCLEOTIDE SEQUENCE [LARGE SCALE GENOMIC DNA]</scope>
    <source>
        <strain>03BB102</strain>
    </source>
</reference>
<sequence length="286" mass="31151">MVAVIIKGNEVAEKKRAQLKEEVVKLKEQGIVPGLAVILVGEDPASRSYVKGKEKGCEQVGIYSELIEFPETITEERLLAEIDRLNGDDRINGILVQLPLPKHIEEKAIIERISPEKDVDGFHPISVGRMMTGQDTFLPCTPHGIVELVKETNLDISGKHVVVIGRSNIVGKPVGQLFLNENATVTYCHSKTQNMKELTKLADILIVAVGRPKMVTADYIKEGAVVIDVGVNRLETGKLCGDVDFDNVLDVAGYITPVPKGVGPMTITMLLHNTVESAKRAGVVCK</sequence>
<gene>
    <name evidence="1" type="primary">folD</name>
    <name type="ordered locus">BCA_4290</name>
</gene>
<feature type="chain" id="PRO_1000185594" description="Bifunctional protein FolD">
    <location>
        <begin position="1"/>
        <end position="286"/>
    </location>
</feature>
<feature type="binding site" evidence="1">
    <location>
        <begin position="165"/>
        <end position="167"/>
    </location>
    <ligand>
        <name>NADP(+)</name>
        <dbReference type="ChEBI" id="CHEBI:58349"/>
    </ligand>
</feature>
<feature type="binding site" evidence="1">
    <location>
        <position position="190"/>
    </location>
    <ligand>
        <name>NADP(+)</name>
        <dbReference type="ChEBI" id="CHEBI:58349"/>
    </ligand>
</feature>
<feature type="binding site" evidence="1">
    <location>
        <position position="231"/>
    </location>
    <ligand>
        <name>NADP(+)</name>
        <dbReference type="ChEBI" id="CHEBI:58349"/>
    </ligand>
</feature>
<proteinExistence type="inferred from homology"/>
<name>FOLD_BACC3</name>
<dbReference type="EC" id="1.5.1.5" evidence="1"/>
<dbReference type="EC" id="3.5.4.9" evidence="1"/>
<dbReference type="EMBL" id="CP001407">
    <property type="protein sequence ID" value="ACO28004.1"/>
    <property type="molecule type" value="Genomic_DNA"/>
</dbReference>
<dbReference type="RefSeq" id="WP_000226720.1">
    <property type="nucleotide sequence ID" value="NZ_CP009318.1"/>
</dbReference>
<dbReference type="SMR" id="C1ERQ4"/>
<dbReference type="KEGG" id="bcx:BCA_4290"/>
<dbReference type="PATRIC" id="fig|572264.18.peg.4241"/>
<dbReference type="UniPathway" id="UPA00193"/>
<dbReference type="Proteomes" id="UP000002210">
    <property type="component" value="Chromosome"/>
</dbReference>
<dbReference type="GO" id="GO:0005829">
    <property type="term" value="C:cytosol"/>
    <property type="evidence" value="ECO:0007669"/>
    <property type="project" value="TreeGrafter"/>
</dbReference>
<dbReference type="GO" id="GO:0004477">
    <property type="term" value="F:methenyltetrahydrofolate cyclohydrolase activity"/>
    <property type="evidence" value="ECO:0007669"/>
    <property type="project" value="UniProtKB-UniRule"/>
</dbReference>
<dbReference type="GO" id="GO:0004488">
    <property type="term" value="F:methylenetetrahydrofolate dehydrogenase (NADP+) activity"/>
    <property type="evidence" value="ECO:0007669"/>
    <property type="project" value="UniProtKB-UniRule"/>
</dbReference>
<dbReference type="GO" id="GO:0000105">
    <property type="term" value="P:L-histidine biosynthetic process"/>
    <property type="evidence" value="ECO:0007669"/>
    <property type="project" value="UniProtKB-KW"/>
</dbReference>
<dbReference type="GO" id="GO:0009086">
    <property type="term" value="P:methionine biosynthetic process"/>
    <property type="evidence" value="ECO:0007669"/>
    <property type="project" value="UniProtKB-KW"/>
</dbReference>
<dbReference type="GO" id="GO:0006164">
    <property type="term" value="P:purine nucleotide biosynthetic process"/>
    <property type="evidence" value="ECO:0007669"/>
    <property type="project" value="UniProtKB-KW"/>
</dbReference>
<dbReference type="GO" id="GO:0035999">
    <property type="term" value="P:tetrahydrofolate interconversion"/>
    <property type="evidence" value="ECO:0007669"/>
    <property type="project" value="UniProtKB-UniRule"/>
</dbReference>
<dbReference type="CDD" id="cd01080">
    <property type="entry name" value="NAD_bind_m-THF_DH_Cyclohyd"/>
    <property type="match status" value="1"/>
</dbReference>
<dbReference type="FunFam" id="3.40.50.10860:FF:000001">
    <property type="entry name" value="Bifunctional protein FolD"/>
    <property type="match status" value="1"/>
</dbReference>
<dbReference type="FunFam" id="3.40.50.720:FF:000006">
    <property type="entry name" value="Bifunctional protein FolD"/>
    <property type="match status" value="1"/>
</dbReference>
<dbReference type="Gene3D" id="3.40.50.10860">
    <property type="entry name" value="Leucine Dehydrogenase, chain A, domain 1"/>
    <property type="match status" value="1"/>
</dbReference>
<dbReference type="Gene3D" id="3.40.50.720">
    <property type="entry name" value="NAD(P)-binding Rossmann-like Domain"/>
    <property type="match status" value="1"/>
</dbReference>
<dbReference type="HAMAP" id="MF_01576">
    <property type="entry name" value="THF_DHG_CYH"/>
    <property type="match status" value="1"/>
</dbReference>
<dbReference type="InterPro" id="IPR046346">
    <property type="entry name" value="Aminoacid_DH-like_N_sf"/>
</dbReference>
<dbReference type="InterPro" id="IPR036291">
    <property type="entry name" value="NAD(P)-bd_dom_sf"/>
</dbReference>
<dbReference type="InterPro" id="IPR000672">
    <property type="entry name" value="THF_DH/CycHdrlase"/>
</dbReference>
<dbReference type="InterPro" id="IPR020630">
    <property type="entry name" value="THF_DH/CycHdrlase_cat_dom"/>
</dbReference>
<dbReference type="InterPro" id="IPR020867">
    <property type="entry name" value="THF_DH/CycHdrlase_CS"/>
</dbReference>
<dbReference type="InterPro" id="IPR020631">
    <property type="entry name" value="THF_DH/CycHdrlase_NAD-bd_dom"/>
</dbReference>
<dbReference type="NCBIfam" id="NF008058">
    <property type="entry name" value="PRK10792.1"/>
    <property type="match status" value="1"/>
</dbReference>
<dbReference type="NCBIfam" id="NF010783">
    <property type="entry name" value="PRK14186.1"/>
    <property type="match status" value="1"/>
</dbReference>
<dbReference type="PANTHER" id="PTHR48099:SF5">
    <property type="entry name" value="C-1-TETRAHYDROFOLATE SYNTHASE, CYTOPLASMIC"/>
    <property type="match status" value="1"/>
</dbReference>
<dbReference type="PANTHER" id="PTHR48099">
    <property type="entry name" value="C-1-TETRAHYDROFOLATE SYNTHASE, CYTOPLASMIC-RELATED"/>
    <property type="match status" value="1"/>
</dbReference>
<dbReference type="Pfam" id="PF00763">
    <property type="entry name" value="THF_DHG_CYH"/>
    <property type="match status" value="1"/>
</dbReference>
<dbReference type="Pfam" id="PF02882">
    <property type="entry name" value="THF_DHG_CYH_C"/>
    <property type="match status" value="1"/>
</dbReference>
<dbReference type="PRINTS" id="PR00085">
    <property type="entry name" value="THFDHDRGNASE"/>
</dbReference>
<dbReference type="SUPFAM" id="SSF53223">
    <property type="entry name" value="Aminoacid dehydrogenase-like, N-terminal domain"/>
    <property type="match status" value="1"/>
</dbReference>
<dbReference type="SUPFAM" id="SSF51735">
    <property type="entry name" value="NAD(P)-binding Rossmann-fold domains"/>
    <property type="match status" value="1"/>
</dbReference>
<dbReference type="PROSITE" id="PS00767">
    <property type="entry name" value="THF_DHG_CYH_2"/>
    <property type="match status" value="1"/>
</dbReference>
<evidence type="ECO:0000255" key="1">
    <source>
        <dbReference type="HAMAP-Rule" id="MF_01576"/>
    </source>
</evidence>
<accession>C1ERQ4</accession>